<proteinExistence type="evidence at protein level"/>
<protein>
    <recommendedName>
        <fullName evidence="19">Acyl-CoA 6-desaturase</fullName>
        <ecNumber evidence="9">1.14.19.3</ecNumber>
    </recommendedName>
    <alternativeName>
        <fullName>Delta(6) fatty acid desaturase</fullName>
        <shortName evidence="2">D6D</shortName>
        <shortName>Delta(6) desaturase</shortName>
        <shortName evidence="13 16">Delta-6 desaturase</shortName>
    </alternativeName>
    <alternativeName>
        <fullName evidence="12">Fatty acid desaturase 2</fullName>
    </alternativeName>
</protein>
<dbReference type="EC" id="1.14.19.3" evidence="9"/>
<dbReference type="EMBL" id="AF126799">
    <property type="protein sequence ID" value="AAD20018.1"/>
    <property type="molecule type" value="mRNA"/>
</dbReference>
<dbReference type="EMBL" id="AF084559">
    <property type="protein sequence ID" value="AAG23121.1"/>
    <property type="molecule type" value="mRNA"/>
</dbReference>
<dbReference type="EMBL" id="AF108658">
    <property type="protein sequence ID" value="AAG43192.1"/>
    <property type="molecule type" value="mRNA"/>
</dbReference>
<dbReference type="EMBL" id="AK027513">
    <property type="protein sequence ID" value="BAB55167.1"/>
    <property type="molecule type" value="mRNA"/>
</dbReference>
<dbReference type="EMBL" id="AK290291">
    <property type="protein sequence ID" value="BAF82980.1"/>
    <property type="molecule type" value="mRNA"/>
</dbReference>
<dbReference type="EMBL" id="AK299762">
    <property type="protein sequence ID" value="BAH13120.1"/>
    <property type="molecule type" value="mRNA"/>
</dbReference>
<dbReference type="EMBL" id="AK074939">
    <property type="protein sequence ID" value="BAC11305.1"/>
    <property type="molecule type" value="mRNA"/>
</dbReference>
<dbReference type="EMBL" id="AP002380">
    <property type="status" value="NOT_ANNOTATED_CDS"/>
    <property type="molecule type" value="Genomic_DNA"/>
</dbReference>
<dbReference type="EMBL" id="CH471076">
    <property type="protein sequence ID" value="EAW73975.1"/>
    <property type="molecule type" value="Genomic_DNA"/>
</dbReference>
<dbReference type="EMBL" id="BC009011">
    <property type="protein sequence ID" value="AAH09011.1"/>
    <property type="molecule type" value="mRNA"/>
</dbReference>
<dbReference type="EMBL" id="AL050118">
    <property type="protein sequence ID" value="CAB43280.1"/>
    <property type="molecule type" value="mRNA"/>
</dbReference>
<dbReference type="EMBL" id="BX640945">
    <property type="protein sequence ID" value="CAE45971.1"/>
    <property type="molecule type" value="mRNA"/>
</dbReference>
<dbReference type="CCDS" id="CCDS60807.1">
    <molecule id="O95864-2"/>
</dbReference>
<dbReference type="CCDS" id="CCDS60808.1">
    <molecule id="O95864-4"/>
</dbReference>
<dbReference type="CCDS" id="CCDS8012.1">
    <molecule id="O95864-1"/>
</dbReference>
<dbReference type="PIR" id="T13155">
    <property type="entry name" value="T13155"/>
</dbReference>
<dbReference type="RefSeq" id="NP_001268430.1">
    <molecule id="O95864-2"/>
    <property type="nucleotide sequence ID" value="NM_001281501.1"/>
</dbReference>
<dbReference type="RefSeq" id="NP_001268431.1">
    <molecule id="O95864-4"/>
    <property type="nucleotide sequence ID" value="NM_001281502.1"/>
</dbReference>
<dbReference type="RefSeq" id="NP_004256.1">
    <molecule id="O95864-1"/>
    <property type="nucleotide sequence ID" value="NM_004265.4"/>
</dbReference>
<dbReference type="RefSeq" id="XP_047283845.1">
    <molecule id="O95864-1"/>
    <property type="nucleotide sequence ID" value="XM_047427889.1"/>
</dbReference>
<dbReference type="RefSeq" id="XP_054226518.1">
    <molecule id="O95864-1"/>
    <property type="nucleotide sequence ID" value="XM_054370543.1"/>
</dbReference>
<dbReference type="SMR" id="O95864"/>
<dbReference type="BioGRID" id="114810">
    <property type="interactions" value="82"/>
</dbReference>
<dbReference type="FunCoup" id="O95864">
    <property type="interactions" value="645"/>
</dbReference>
<dbReference type="IntAct" id="O95864">
    <property type="interactions" value="30"/>
</dbReference>
<dbReference type="MINT" id="O95864"/>
<dbReference type="STRING" id="9606.ENSP00000278840"/>
<dbReference type="BindingDB" id="O95864"/>
<dbReference type="ChEMBL" id="CHEMBL6097"/>
<dbReference type="DrugBank" id="DB00132">
    <property type="generic name" value="alpha-Linolenic acid"/>
</dbReference>
<dbReference type="DrugBank" id="DB11358">
    <property type="generic name" value="Evening primrose oil"/>
</dbReference>
<dbReference type="DrugBank" id="DB13168">
    <property type="generic name" value="Omega-6 fatty acids"/>
</dbReference>
<dbReference type="SwissLipids" id="SLP:000000275"/>
<dbReference type="GlyGen" id="O95864">
    <property type="glycosylation" value="2 sites, 1 O-linked glycan (1 site)"/>
</dbReference>
<dbReference type="iPTMnet" id="O95864"/>
<dbReference type="PhosphoSitePlus" id="O95864"/>
<dbReference type="SwissPalm" id="O95864"/>
<dbReference type="BioMuta" id="FADS2"/>
<dbReference type="jPOST" id="O95864"/>
<dbReference type="MassIVE" id="O95864"/>
<dbReference type="PaxDb" id="9606-ENSP00000278840"/>
<dbReference type="PeptideAtlas" id="O95864"/>
<dbReference type="ProteomicsDB" id="51097">
    <molecule id="O95864-1"/>
</dbReference>
<dbReference type="ProteomicsDB" id="51098">
    <molecule id="O95864-2"/>
</dbReference>
<dbReference type="ProteomicsDB" id="51099">
    <molecule id="O95864-3"/>
</dbReference>
<dbReference type="ProteomicsDB" id="6739"/>
<dbReference type="Pumba" id="O95864"/>
<dbReference type="Antibodypedia" id="1645">
    <property type="antibodies" value="182 antibodies from 25 providers"/>
</dbReference>
<dbReference type="DNASU" id="9415"/>
<dbReference type="Ensembl" id="ENST00000257261.10">
    <molecule id="O95864-2"/>
    <property type="protein sequence ID" value="ENSP00000257261.6"/>
    <property type="gene ID" value="ENSG00000134824.14"/>
</dbReference>
<dbReference type="Ensembl" id="ENST00000278840.9">
    <molecule id="O95864-1"/>
    <property type="protein sequence ID" value="ENSP00000278840.4"/>
    <property type="gene ID" value="ENSG00000134824.14"/>
</dbReference>
<dbReference type="Ensembl" id="ENST00000521849.5">
    <molecule id="O95864-3"/>
    <property type="protein sequence ID" value="ENSP00000431091.1"/>
    <property type="gene ID" value="ENSG00000134824.14"/>
</dbReference>
<dbReference type="Ensembl" id="ENST00000522056.5">
    <molecule id="O95864-4"/>
    <property type="protein sequence ID" value="ENSP00000429500.1"/>
    <property type="gene ID" value="ENSG00000134824.14"/>
</dbReference>
<dbReference type="GeneID" id="9415"/>
<dbReference type="KEGG" id="hsa:9415"/>
<dbReference type="MANE-Select" id="ENST00000278840.9">
    <property type="protein sequence ID" value="ENSP00000278840.4"/>
    <property type="RefSeq nucleotide sequence ID" value="NM_004265.4"/>
    <property type="RefSeq protein sequence ID" value="NP_004256.1"/>
</dbReference>
<dbReference type="UCSC" id="uc001nsj.4">
    <molecule id="O95864-1"/>
    <property type="organism name" value="human"/>
</dbReference>
<dbReference type="AGR" id="HGNC:3575"/>
<dbReference type="CTD" id="9415"/>
<dbReference type="DisGeNET" id="9415"/>
<dbReference type="GeneCards" id="FADS2"/>
<dbReference type="HGNC" id="HGNC:3575">
    <property type="gene designation" value="FADS2"/>
</dbReference>
<dbReference type="HPA" id="ENSG00000134824">
    <property type="expression patterns" value="Tissue enhanced (adrenal)"/>
</dbReference>
<dbReference type="MIM" id="606149">
    <property type="type" value="gene"/>
</dbReference>
<dbReference type="neXtProt" id="NX_O95864"/>
<dbReference type="OpenTargets" id="ENSG00000134824"/>
<dbReference type="PharmGKB" id="PA27974"/>
<dbReference type="VEuPathDB" id="HostDB:ENSG00000134824"/>
<dbReference type="eggNOG" id="KOG4232">
    <property type="taxonomic scope" value="Eukaryota"/>
</dbReference>
<dbReference type="GeneTree" id="ENSGT00950000182990"/>
<dbReference type="HOGENOM" id="CLU_016265_0_0_1"/>
<dbReference type="InParanoid" id="O95864"/>
<dbReference type="OMA" id="QWWKNKH"/>
<dbReference type="OrthoDB" id="260091at2759"/>
<dbReference type="PAN-GO" id="O95864">
    <property type="GO annotations" value="2 GO annotations based on evolutionary models"/>
</dbReference>
<dbReference type="PhylomeDB" id="O95864"/>
<dbReference type="TreeFam" id="TF313604"/>
<dbReference type="BioCyc" id="MetaCyc:HS05918-MONOMER"/>
<dbReference type="BRENDA" id="1.14.19.3">
    <property type="organism ID" value="2681"/>
</dbReference>
<dbReference type="PathwayCommons" id="O95864"/>
<dbReference type="Reactome" id="R-HSA-2046105">
    <property type="pathway name" value="Linoleic acid (LA) metabolism"/>
</dbReference>
<dbReference type="Reactome" id="R-HSA-2046106">
    <property type="pathway name" value="alpha-linolenic acid (ALA) metabolism"/>
</dbReference>
<dbReference type="SignaLink" id="O95864"/>
<dbReference type="SIGNOR" id="O95864"/>
<dbReference type="UniPathway" id="UPA00658"/>
<dbReference type="BioGRID-ORCS" id="9415">
    <property type="hits" value="30 hits in 1167 CRISPR screens"/>
</dbReference>
<dbReference type="ChiTaRS" id="FADS2">
    <property type="organism name" value="human"/>
</dbReference>
<dbReference type="GeneWiki" id="FADS2"/>
<dbReference type="GenomeRNAi" id="9415"/>
<dbReference type="Pharos" id="O95864">
    <property type="development level" value="Tbio"/>
</dbReference>
<dbReference type="PRO" id="PR:O95864"/>
<dbReference type="Proteomes" id="UP000005640">
    <property type="component" value="Chromosome 11"/>
</dbReference>
<dbReference type="RNAct" id="O95864">
    <property type="molecule type" value="protein"/>
</dbReference>
<dbReference type="Bgee" id="ENSG00000134824">
    <property type="expression patterns" value="Expressed in right adrenal gland cortex and 148 other cell types or tissues"/>
</dbReference>
<dbReference type="ExpressionAtlas" id="O95864">
    <property type="expression patterns" value="baseline and differential"/>
</dbReference>
<dbReference type="GO" id="GO:0005789">
    <property type="term" value="C:endoplasmic reticulum membrane"/>
    <property type="evidence" value="ECO:0000304"/>
    <property type="project" value="Reactome"/>
</dbReference>
<dbReference type="GO" id="GO:0016020">
    <property type="term" value="C:membrane"/>
    <property type="evidence" value="ECO:0007005"/>
    <property type="project" value="UniProtKB"/>
</dbReference>
<dbReference type="GO" id="GO:0005886">
    <property type="term" value="C:plasma membrane"/>
    <property type="evidence" value="ECO:0000304"/>
    <property type="project" value="ProtInc"/>
</dbReference>
<dbReference type="GO" id="GO:0016213">
    <property type="term" value="F:acyl-CoA 6-desaturase activity"/>
    <property type="evidence" value="ECO:0000304"/>
    <property type="project" value="Reactome"/>
</dbReference>
<dbReference type="GO" id="GO:0016717">
    <property type="term" value="F:oxidoreductase activity, acting on paired donors, with oxidation of a pair of donors resulting in the reduction of molecular oxygen to two molecules of water"/>
    <property type="evidence" value="ECO:0000318"/>
    <property type="project" value="GO_Central"/>
</dbReference>
<dbReference type="GO" id="GO:0004768">
    <property type="term" value="F:stearoyl-CoA 9-desaturase activity"/>
    <property type="evidence" value="ECO:0007669"/>
    <property type="project" value="Ensembl"/>
</dbReference>
<dbReference type="GO" id="GO:0036109">
    <property type="term" value="P:alpha-linolenic acid metabolic process"/>
    <property type="evidence" value="ECO:0000304"/>
    <property type="project" value="Reactome"/>
</dbReference>
<dbReference type="GO" id="GO:0002538">
    <property type="term" value="P:arachidonate metabolite production involved in inflammatory response"/>
    <property type="evidence" value="ECO:0007669"/>
    <property type="project" value="Ensembl"/>
</dbReference>
<dbReference type="GO" id="GO:1901570">
    <property type="term" value="P:fatty acid derivative biosynthetic process"/>
    <property type="evidence" value="ECO:0007669"/>
    <property type="project" value="Ensembl"/>
</dbReference>
<dbReference type="GO" id="GO:0043651">
    <property type="term" value="P:linoleic acid metabolic process"/>
    <property type="evidence" value="ECO:0000304"/>
    <property type="project" value="Reactome"/>
</dbReference>
<dbReference type="GO" id="GO:0006629">
    <property type="term" value="P:lipid metabolic process"/>
    <property type="evidence" value="ECO:0000318"/>
    <property type="project" value="GO_Central"/>
</dbReference>
<dbReference type="GO" id="GO:0042759">
    <property type="term" value="P:long-chain fatty acid biosynthetic process"/>
    <property type="evidence" value="ECO:0007669"/>
    <property type="project" value="Ensembl"/>
</dbReference>
<dbReference type="GO" id="GO:1900409">
    <property type="term" value="P:positive regulation of cellular response to oxidative stress"/>
    <property type="evidence" value="ECO:0007669"/>
    <property type="project" value="Ensembl"/>
</dbReference>
<dbReference type="GO" id="GO:0006636">
    <property type="term" value="P:unsaturated fatty acid biosynthetic process"/>
    <property type="evidence" value="ECO:0000304"/>
    <property type="project" value="ProtInc"/>
</dbReference>
<dbReference type="CDD" id="cd03506">
    <property type="entry name" value="Delta6-FADS-like"/>
    <property type="match status" value="1"/>
</dbReference>
<dbReference type="FunFam" id="3.10.120.10:FF:000010">
    <property type="entry name" value="Delta-6 fatty acyl desaturase"/>
    <property type="match status" value="1"/>
</dbReference>
<dbReference type="Gene3D" id="3.10.120.10">
    <property type="entry name" value="Cytochrome b5-like heme/steroid binding domain"/>
    <property type="match status" value="1"/>
</dbReference>
<dbReference type="InterPro" id="IPR001199">
    <property type="entry name" value="Cyt_B5-like_heme/steroid-bd"/>
</dbReference>
<dbReference type="InterPro" id="IPR036400">
    <property type="entry name" value="Cyt_B5-like_heme/steroid_sf"/>
</dbReference>
<dbReference type="InterPro" id="IPR005804">
    <property type="entry name" value="FA_desaturase_dom"/>
</dbReference>
<dbReference type="InterPro" id="IPR012171">
    <property type="entry name" value="Fatty_acid_desaturase"/>
</dbReference>
<dbReference type="PANTHER" id="PTHR19353:SF12">
    <property type="entry name" value="ACYL-COA 6-DESATURASE"/>
    <property type="match status" value="1"/>
</dbReference>
<dbReference type="PANTHER" id="PTHR19353">
    <property type="entry name" value="FATTY ACID DESATURASE 2"/>
    <property type="match status" value="1"/>
</dbReference>
<dbReference type="Pfam" id="PF00173">
    <property type="entry name" value="Cyt-b5"/>
    <property type="match status" value="1"/>
</dbReference>
<dbReference type="Pfam" id="PF00487">
    <property type="entry name" value="FA_desaturase"/>
    <property type="match status" value="1"/>
</dbReference>
<dbReference type="PIRSF" id="PIRSF015921">
    <property type="entry name" value="FA_sphinglp_des"/>
    <property type="match status" value="1"/>
</dbReference>
<dbReference type="SMART" id="SM01117">
    <property type="entry name" value="Cyt-b5"/>
    <property type="match status" value="1"/>
</dbReference>
<dbReference type="SUPFAM" id="SSF55856">
    <property type="entry name" value="Cytochrome b5-like heme/steroid binding domain"/>
    <property type="match status" value="1"/>
</dbReference>
<dbReference type="PROSITE" id="PS50255">
    <property type="entry name" value="CYTOCHROME_B5_2"/>
    <property type="match status" value="1"/>
</dbReference>
<evidence type="ECO:0000250" key="1">
    <source>
        <dbReference type="UniProtKB" id="B8R1K0"/>
    </source>
</evidence>
<evidence type="ECO:0000250" key="2">
    <source>
        <dbReference type="UniProtKB" id="Q9Z0R9"/>
    </source>
</evidence>
<evidence type="ECO:0000250" key="3">
    <source>
        <dbReference type="UniProtKB" id="Q9Z122"/>
    </source>
</evidence>
<evidence type="ECO:0000255" key="4"/>
<evidence type="ECO:0000255" key="5">
    <source>
        <dbReference type="PROSITE-ProRule" id="PRU00279"/>
    </source>
</evidence>
<evidence type="ECO:0000269" key="6">
    <source>
    </source>
</evidence>
<evidence type="ECO:0000269" key="7">
    <source>
    </source>
</evidence>
<evidence type="ECO:0000269" key="8">
    <source>
    </source>
</evidence>
<evidence type="ECO:0000269" key="9">
    <source>
    </source>
</evidence>
<evidence type="ECO:0000269" key="10">
    <source>
    </source>
</evidence>
<evidence type="ECO:0000269" key="11">
    <source>
    </source>
</evidence>
<evidence type="ECO:0000303" key="12">
    <source>
    </source>
</evidence>
<evidence type="ECO:0000303" key="13">
    <source>
    </source>
</evidence>
<evidence type="ECO:0000303" key="14">
    <source>
    </source>
</evidence>
<evidence type="ECO:0000303" key="15">
    <source>
    </source>
</evidence>
<evidence type="ECO:0000303" key="16">
    <source>
    </source>
</evidence>
<evidence type="ECO:0000303" key="17">
    <source ref="3"/>
</evidence>
<evidence type="ECO:0000305" key="18"/>
<evidence type="ECO:0000305" key="19">
    <source>
    </source>
</evidence>
<evidence type="ECO:0000305" key="20">
    <source>
    </source>
</evidence>
<evidence type="ECO:0000312" key="21">
    <source>
        <dbReference type="HGNC" id="HGNC:3575"/>
    </source>
</evidence>
<keyword id="KW-0025">Alternative splicing</keyword>
<keyword id="KW-0249">Electron transport</keyword>
<keyword id="KW-0256">Endoplasmic reticulum</keyword>
<keyword id="KW-0275">Fatty acid biosynthesis</keyword>
<keyword id="KW-0276">Fatty acid metabolism</keyword>
<keyword id="KW-0444">Lipid biosynthesis</keyword>
<keyword id="KW-0443">Lipid metabolism</keyword>
<keyword id="KW-0472">Membrane</keyword>
<keyword id="KW-0560">Oxidoreductase</keyword>
<keyword id="KW-1267">Proteomics identification</keyword>
<keyword id="KW-1185">Reference proteome</keyword>
<keyword id="KW-0812">Transmembrane</keyword>
<keyword id="KW-1133">Transmembrane helix</keyword>
<keyword id="KW-0813">Transport</keyword>
<accession>O95864</accession>
<accession>A8K2M6</accession>
<accession>B7Z634</accession>
<accession>Q6MZQ7</accession>
<accession>Q96H07</accession>
<accession>Q96SV8</accession>
<accession>Q9H3G3</accession>
<accession>Q9Y3X4</accession>
<sequence length="444" mass="52259">MGKGGNQGEGAAEREVSVPTFSWEEIQKHNLRTDRWLVIDRKVYNITKWSIQHPGGQRVIGHYAGEDATDAFRAFHPDLEFVGKFLKPLLIGELAPEEPSQDHGKNSKITEDFRALRKTAEDMNLFKTNHVFFLLLLAHIIALESIAWFTVFYFGNGWIPTLITAFVLATSQAQAGWLQHDYGHLSVYRKPKWNHLVHKFVIGHLKGASANWWNHRHFQHHAKPNIFHKDPDVNMLHVFVLGEWQPIEYGKKKLKYLPYNHQHEYFFLIGPPLLIPMYFQYQIIMTMIVHKNWVDLAWAVSYYIRFFITYIPFYGILGALLFLNFIRFLESHWFVWVTQMNHIVMEIDQEAYRDWFSSQLTATCNVEQSFFNDWFSGHLNFQIEHHLFPTMPRHNLHKIAPLVKSLCAKHGIEYQEKPLLRALLDIIRSLKKSGKLWLDAYLHK</sequence>
<comment type="function">
    <text evidence="1 3 9">Involved in the biosynthesis of highly unsaturated fatty acids (HUFA) from the essential polyunsaturated fatty acids (PUFA) linoleic acid (LA) (18:2n-6) and alpha-linolenic acid (ALA) (18:3n-3) precursors, acting as a fatty acyl-coenzyme A (CoA) desaturase that introduces a cis double bond at carbon 6 of the fatty acyl chain. Catalyzes the first and rate limiting step in this pathway which is the desaturation of LA (18:2n-6) and ALA (18:3n-3) into gamma-linoleate (GLA) (18:3n-6) and stearidonate (18:4n-3), respectively (PubMed:12713571). Subsequently, in the biosynthetic pathway of HUFA n-3 series, it desaturates tetracosapentaenoate (24:5n-3) to tetracosahexaenoate (24:6n-3), which is then converted to docosahexaenoate (DHA)(22:6n-3), an important lipid for nervous system function (By similarity). Desaturates hexadecanate (palmitate) to produce 6Z-hexadecenoate (sapienate), a fatty acid unique to humans and major component of human sebum, that has been implicated in the development of acne and may have potent antibacterial activity (PubMed:12713571). It can also desaturate (11E)-octadecenoate (trans-vaccenoate, the predominant trans fatty acid in human milk) at carbon 6 generating (6Z,11E)-octadecadienoate (By similarity). In addition to Delta-6 activity, this enzyme exhibits Delta-8 activity with slight biases toward n-3 fatty acyl-CoA substrates (By similarity).</text>
</comment>
<comment type="catalytic activity">
    <reaction evidence="9">
        <text>(9Z,12Z)-octadecadienoyl-CoA + 2 Fe(II)-[cytochrome b5] + O2 + 2 H(+) = (6Z,9Z,12Z)-octadecatrienoyl-CoA + 2 Fe(III)-[cytochrome b5] + 2 H2O</text>
        <dbReference type="Rhea" id="RHEA:47140"/>
        <dbReference type="Rhea" id="RHEA-COMP:10438"/>
        <dbReference type="Rhea" id="RHEA-COMP:10439"/>
        <dbReference type="ChEBI" id="CHEBI:15377"/>
        <dbReference type="ChEBI" id="CHEBI:15378"/>
        <dbReference type="ChEBI" id="CHEBI:15379"/>
        <dbReference type="ChEBI" id="CHEBI:29033"/>
        <dbReference type="ChEBI" id="CHEBI:29034"/>
        <dbReference type="ChEBI" id="CHEBI:57363"/>
        <dbReference type="ChEBI" id="CHEBI:57383"/>
        <dbReference type="EC" id="1.14.19.3"/>
    </reaction>
    <physiologicalReaction direction="left-to-right" evidence="9">
        <dbReference type="Rhea" id="RHEA:47141"/>
    </physiologicalReaction>
</comment>
<comment type="catalytic activity">
    <reaction evidence="2">
        <text>(9Z,12Z,15Z)-octadecatrienoyl-CoA + 2 Fe(II)-[cytochrome b5] + O2 + 2 H(+) = (6Z,9Z,12Z,15Z)-octadecatetraenoyl-CoA + 2 Fe(III)-[cytochrome b5] + 2 H2O</text>
        <dbReference type="Rhea" id="RHEA:47144"/>
        <dbReference type="Rhea" id="RHEA-COMP:10438"/>
        <dbReference type="Rhea" id="RHEA-COMP:10439"/>
        <dbReference type="ChEBI" id="CHEBI:15377"/>
        <dbReference type="ChEBI" id="CHEBI:15378"/>
        <dbReference type="ChEBI" id="CHEBI:15379"/>
        <dbReference type="ChEBI" id="CHEBI:29033"/>
        <dbReference type="ChEBI" id="CHEBI:29034"/>
        <dbReference type="ChEBI" id="CHEBI:71489"/>
        <dbReference type="ChEBI" id="CHEBI:74034"/>
        <dbReference type="EC" id="1.14.19.3"/>
    </reaction>
    <physiologicalReaction direction="left-to-right" evidence="2">
        <dbReference type="Rhea" id="RHEA:47145"/>
    </physiologicalReaction>
</comment>
<comment type="catalytic activity">
    <reaction evidence="9">
        <text>hexadecanoyl-CoA + 2 Fe(II)-[cytochrome b5] + O2 + 2 H(+) = (6Z)-hexadecenoyl-CoA + 2 Fe(III)-[cytochrome b5] + 2 H2O</text>
        <dbReference type="Rhea" id="RHEA:37023"/>
        <dbReference type="Rhea" id="RHEA-COMP:10438"/>
        <dbReference type="Rhea" id="RHEA-COMP:10439"/>
        <dbReference type="ChEBI" id="CHEBI:15377"/>
        <dbReference type="ChEBI" id="CHEBI:15378"/>
        <dbReference type="ChEBI" id="CHEBI:15379"/>
        <dbReference type="ChEBI" id="CHEBI:29033"/>
        <dbReference type="ChEBI" id="CHEBI:29034"/>
        <dbReference type="ChEBI" id="CHEBI:57379"/>
        <dbReference type="ChEBI" id="CHEBI:74339"/>
    </reaction>
    <physiologicalReaction direction="left-to-right" evidence="9">
        <dbReference type="Rhea" id="RHEA:37024"/>
    </physiologicalReaction>
</comment>
<comment type="catalytic activity">
    <reaction evidence="3">
        <text>(9Z,12Z,15Z,18Z,21Z)-tetracosapentaenoyl-CoA + 2 Fe(II)-[cytochrome b5] + O2 + 2 H(+) = (6Z,9Z,12Z,15Z,18Z,21Z)-tetracosahexaenoyl-CoA + 2 Fe(III)-[cytochrome b5] + 2 H2O</text>
        <dbReference type="Rhea" id="RHEA:36999"/>
        <dbReference type="Rhea" id="RHEA-COMP:10438"/>
        <dbReference type="Rhea" id="RHEA-COMP:10439"/>
        <dbReference type="ChEBI" id="CHEBI:15377"/>
        <dbReference type="ChEBI" id="CHEBI:15378"/>
        <dbReference type="ChEBI" id="CHEBI:15379"/>
        <dbReference type="ChEBI" id="CHEBI:29033"/>
        <dbReference type="ChEBI" id="CHEBI:29034"/>
        <dbReference type="ChEBI" id="CHEBI:74083"/>
        <dbReference type="ChEBI" id="CHEBI:74086"/>
    </reaction>
    <physiologicalReaction direction="left-to-right" evidence="3">
        <dbReference type="Rhea" id="RHEA:37000"/>
    </physiologicalReaction>
</comment>
<comment type="catalytic activity">
    <reaction evidence="3">
        <text>(11E)-octadecenoyl-CoA + 2 Fe(II)-[cytochrome b5] + O2 + 2 H(+) = (6Z,11E)-octadecadienoyl-CoA + 2 Fe(III)-[cytochrome b5] + 2 H2O</text>
        <dbReference type="Rhea" id="RHEA:46064"/>
        <dbReference type="Rhea" id="RHEA-COMP:10438"/>
        <dbReference type="Rhea" id="RHEA-COMP:10439"/>
        <dbReference type="ChEBI" id="CHEBI:15377"/>
        <dbReference type="ChEBI" id="CHEBI:15378"/>
        <dbReference type="ChEBI" id="CHEBI:15379"/>
        <dbReference type="ChEBI" id="CHEBI:29033"/>
        <dbReference type="ChEBI" id="CHEBI:29034"/>
        <dbReference type="ChEBI" id="CHEBI:74296"/>
        <dbReference type="ChEBI" id="CHEBI:85652"/>
    </reaction>
    <physiologicalReaction direction="left-to-right" evidence="3">
        <dbReference type="Rhea" id="RHEA:46065"/>
    </physiologicalReaction>
</comment>
<comment type="catalytic activity">
    <reaction evidence="1">
        <text>(11Z,14Z)-eicosadienoyl-CoA + 2 Fe(II)-[cytochrome b5] + O2 + 2 H(+) = (8Z,11Z,14Z)-eicosatrienoyl-CoA + 2 Fe(III)-[cytochrome b5] + 2 H2O</text>
        <dbReference type="Rhea" id="RHEA:39567"/>
        <dbReference type="Rhea" id="RHEA-COMP:10438"/>
        <dbReference type="Rhea" id="RHEA-COMP:10439"/>
        <dbReference type="ChEBI" id="CHEBI:15377"/>
        <dbReference type="ChEBI" id="CHEBI:15378"/>
        <dbReference type="ChEBI" id="CHEBI:15379"/>
        <dbReference type="ChEBI" id="CHEBI:29033"/>
        <dbReference type="ChEBI" id="CHEBI:29034"/>
        <dbReference type="ChEBI" id="CHEBI:74264"/>
        <dbReference type="ChEBI" id="CHEBI:76410"/>
    </reaction>
    <physiologicalReaction direction="left-to-right" evidence="1">
        <dbReference type="Rhea" id="RHEA:39568"/>
    </physiologicalReaction>
</comment>
<comment type="catalytic activity">
    <reaction evidence="1">
        <text>(11Z,14Z,17Z)-eicosatrienoyl-CoA + 2 Fe(II)-[cytochrome b5] + O2 + 2 H(+) = (8Z,11Z,14Z,17Z)-eicosatetraenoyl-CoA + 2 Fe(III)-[cytochrome b5] + 2 H2O</text>
        <dbReference type="Rhea" id="RHEA:39571"/>
        <dbReference type="Rhea" id="RHEA-COMP:10438"/>
        <dbReference type="Rhea" id="RHEA-COMP:10439"/>
        <dbReference type="ChEBI" id="CHEBI:15377"/>
        <dbReference type="ChEBI" id="CHEBI:15378"/>
        <dbReference type="ChEBI" id="CHEBI:15379"/>
        <dbReference type="ChEBI" id="CHEBI:29033"/>
        <dbReference type="ChEBI" id="CHEBI:29034"/>
        <dbReference type="ChEBI" id="CHEBI:74265"/>
        <dbReference type="ChEBI" id="CHEBI:74328"/>
    </reaction>
    <physiologicalReaction direction="left-to-right" evidence="1">
        <dbReference type="Rhea" id="RHEA:39572"/>
    </physiologicalReaction>
</comment>
<comment type="pathway">
    <text evidence="20">Lipid metabolism; polyunsaturated fatty acid biosynthesis.</text>
</comment>
<comment type="interaction">
    <interactant intactId="EBI-12057609">
        <id>O95864-3</id>
    </interactant>
    <interactant intactId="EBI-948001">
        <id>Q15323</id>
        <label>KRT31</label>
    </interactant>
    <organismsDiffer>false</organismsDiffer>
    <experiments>3</experiments>
</comment>
<comment type="interaction">
    <interactant intactId="EBI-12057609">
        <id>O95864-3</id>
    </interactant>
    <interactant intactId="EBI-10171697">
        <id>Q6A162</id>
        <label>KRT40</label>
    </interactant>
    <organismsDiffer>false</organismsDiffer>
    <experiments>3</experiments>
</comment>
<comment type="interaction">
    <interactant intactId="EBI-12057609">
        <id>O95864-3</id>
    </interactant>
    <interactant intactId="EBI-22310682">
        <id>P0DPK4</id>
        <label>NOTCH2NLC</label>
    </interactant>
    <organismsDiffer>false</organismsDiffer>
    <experiments>3</experiments>
</comment>
<comment type="interaction">
    <interactant intactId="EBI-12057609">
        <id>O95864-3</id>
    </interactant>
    <interactant intactId="EBI-625509">
        <id>Q8N720</id>
        <label>ZNF655</label>
    </interactant>
    <organismsDiffer>false</organismsDiffer>
    <experiments>3</experiments>
</comment>
<comment type="subcellular location">
    <subcellularLocation>
        <location evidence="18">Endoplasmic reticulum membrane</location>
        <topology evidence="18">Multi-pass membrane protein</topology>
    </subcellularLocation>
</comment>
<comment type="alternative products">
    <event type="alternative splicing"/>
    <isoform>
        <id>O95864-1</id>
        <name>1</name>
        <sequence type="displayed"/>
    </isoform>
    <isoform>
        <id>O95864-2</id>
        <name>2</name>
        <sequence type="described" ref="VSP_028568"/>
    </isoform>
    <isoform>
        <id>O95864-3</id>
        <name>3</name>
        <sequence type="described" ref="VSP_028569"/>
    </isoform>
    <isoform>
        <id>O95864-4</id>
        <name>4</name>
        <sequence type="described" ref="VSP_054809"/>
    </isoform>
</comment>
<comment type="tissue specificity">
    <text evidence="6 10 11">Expressed in a wide array of tissues, highest expression is found in liver followed by brain, lung, heart, and retina. A lower level is found in breast tumor when compared with normal tissues; lowest levels were found in patients with poor prognostic index.</text>
</comment>
<comment type="developmental stage">
    <text>Found in fetal heart.</text>
</comment>
<comment type="induction">
    <text evidence="7 8">Repressed by dietary highly unsaturated fatty acids.</text>
</comment>
<comment type="domain">
    <text evidence="16">The protein sequence includes a number of characteristic features of microsomal fatty acid desaturases including the three histidine boxes HXXXH, HXXHH, and QXXHH (these domains may contain the active site and/or be involved in metal ion binding), and the N-terminal cytochrome b5 domain containing the heme-binding motif, HPGG, similar to that of other fatty acid desaturases.</text>
</comment>
<comment type="similarity">
    <text evidence="18">Belongs to the fatty acid desaturase type 1 family.</text>
</comment>
<organism>
    <name type="scientific">Homo sapiens</name>
    <name type="common">Human</name>
    <dbReference type="NCBI Taxonomy" id="9606"/>
    <lineage>
        <taxon>Eukaryota</taxon>
        <taxon>Metazoa</taxon>
        <taxon>Chordata</taxon>
        <taxon>Craniata</taxon>
        <taxon>Vertebrata</taxon>
        <taxon>Euteleostomi</taxon>
        <taxon>Mammalia</taxon>
        <taxon>Eutheria</taxon>
        <taxon>Euarchontoglires</taxon>
        <taxon>Primates</taxon>
        <taxon>Haplorrhini</taxon>
        <taxon>Catarrhini</taxon>
        <taxon>Hominidae</taxon>
        <taxon>Homo</taxon>
    </lineage>
</organism>
<reference key="1">
    <citation type="journal article" date="1999" name="J. Biol. Chem.">
        <title>Cloning, expression, and nutritional regulation of the mammalian Delta-6 desaturase.</title>
        <authorList>
            <person name="Cho H.P."/>
            <person name="Nakamura M.T."/>
            <person name="Clarke S.D."/>
        </authorList>
    </citation>
    <scope>NUCLEOTIDE SEQUENCE [MRNA] (ISOFORM 1)</scope>
    <scope>TISSUE SPECIFICITY</scope>
</reference>
<reference key="2">
    <citation type="journal article" date="2000" name="Genomics">
        <title>cDNA cloning, genomic structure, and chromosomal localization of three members of the human fatty acid desaturase family.</title>
        <authorList>
            <person name="Marquardt A."/>
            <person name="Stoehr H."/>
            <person name="White K."/>
            <person name="Weber B.H."/>
        </authorList>
    </citation>
    <scope>NUCLEOTIDE SEQUENCE [MRNA] (ISOFORM 1)</scope>
    <scope>TISSUE SPECIFICITY</scope>
</reference>
<reference key="3">
    <citation type="submission" date="1998-11" db="EMBL/GenBank/DDBJ databases">
        <authorList>
            <person name="Zhang J.S.S."/>
            <person name="Reddel R.R."/>
        </authorList>
    </citation>
    <scope>NUCLEOTIDE SEQUENCE [MRNA] (ISOFORM 2)</scope>
    <source>
        <tissue>Mesothelium</tissue>
    </source>
</reference>
<reference key="4">
    <citation type="journal article" date="2004" name="Nat. Genet.">
        <title>Complete sequencing and characterization of 21,243 full-length human cDNAs.</title>
        <authorList>
            <person name="Ota T."/>
            <person name="Suzuki Y."/>
            <person name="Nishikawa T."/>
            <person name="Otsuki T."/>
            <person name="Sugiyama T."/>
            <person name="Irie R."/>
            <person name="Wakamatsu A."/>
            <person name="Hayashi K."/>
            <person name="Sato H."/>
            <person name="Nagai K."/>
            <person name="Kimura K."/>
            <person name="Makita H."/>
            <person name="Sekine M."/>
            <person name="Obayashi M."/>
            <person name="Nishi T."/>
            <person name="Shibahara T."/>
            <person name="Tanaka T."/>
            <person name="Ishii S."/>
            <person name="Yamamoto J."/>
            <person name="Saito K."/>
            <person name="Kawai Y."/>
            <person name="Isono Y."/>
            <person name="Nakamura Y."/>
            <person name="Nagahari K."/>
            <person name="Murakami K."/>
            <person name="Yasuda T."/>
            <person name="Iwayanagi T."/>
            <person name="Wagatsuma M."/>
            <person name="Shiratori A."/>
            <person name="Sudo H."/>
            <person name="Hosoiri T."/>
            <person name="Kaku Y."/>
            <person name="Kodaira H."/>
            <person name="Kondo H."/>
            <person name="Sugawara M."/>
            <person name="Takahashi M."/>
            <person name="Kanda K."/>
            <person name="Yokoi T."/>
            <person name="Furuya T."/>
            <person name="Kikkawa E."/>
            <person name="Omura Y."/>
            <person name="Abe K."/>
            <person name="Kamihara K."/>
            <person name="Katsuta N."/>
            <person name="Sato K."/>
            <person name="Tanikawa M."/>
            <person name="Yamazaki M."/>
            <person name="Ninomiya K."/>
            <person name="Ishibashi T."/>
            <person name="Yamashita H."/>
            <person name="Murakawa K."/>
            <person name="Fujimori K."/>
            <person name="Tanai H."/>
            <person name="Kimata M."/>
            <person name="Watanabe M."/>
            <person name="Hiraoka S."/>
            <person name="Chiba Y."/>
            <person name="Ishida S."/>
            <person name="Ono Y."/>
            <person name="Takiguchi S."/>
            <person name="Watanabe S."/>
            <person name="Yosida M."/>
            <person name="Hotuta T."/>
            <person name="Kusano J."/>
            <person name="Kanehori K."/>
            <person name="Takahashi-Fujii A."/>
            <person name="Hara H."/>
            <person name="Tanase T.-O."/>
            <person name="Nomura Y."/>
            <person name="Togiya S."/>
            <person name="Komai F."/>
            <person name="Hara R."/>
            <person name="Takeuchi K."/>
            <person name="Arita M."/>
            <person name="Imose N."/>
            <person name="Musashino K."/>
            <person name="Yuuki H."/>
            <person name="Oshima A."/>
            <person name="Sasaki N."/>
            <person name="Aotsuka S."/>
            <person name="Yoshikawa Y."/>
            <person name="Matsunawa H."/>
            <person name="Ichihara T."/>
            <person name="Shiohata N."/>
            <person name="Sano S."/>
            <person name="Moriya S."/>
            <person name="Momiyama H."/>
            <person name="Satoh N."/>
            <person name="Takami S."/>
            <person name="Terashima Y."/>
            <person name="Suzuki O."/>
            <person name="Nakagawa S."/>
            <person name="Senoh A."/>
            <person name="Mizoguchi H."/>
            <person name="Goto Y."/>
            <person name="Shimizu F."/>
            <person name="Wakebe H."/>
            <person name="Hishigaki H."/>
            <person name="Watanabe T."/>
            <person name="Sugiyama A."/>
            <person name="Takemoto M."/>
            <person name="Kawakami B."/>
            <person name="Yamazaki M."/>
            <person name="Watanabe K."/>
            <person name="Kumagai A."/>
            <person name="Itakura S."/>
            <person name="Fukuzumi Y."/>
            <person name="Fujimori Y."/>
            <person name="Komiyama M."/>
            <person name="Tashiro H."/>
            <person name="Tanigami A."/>
            <person name="Fujiwara T."/>
            <person name="Ono T."/>
            <person name="Yamada K."/>
            <person name="Fujii Y."/>
            <person name="Ozaki K."/>
            <person name="Hirao M."/>
            <person name="Ohmori Y."/>
            <person name="Kawabata A."/>
            <person name="Hikiji T."/>
            <person name="Kobatake N."/>
            <person name="Inagaki H."/>
            <person name="Ikema Y."/>
            <person name="Okamoto S."/>
            <person name="Okitani R."/>
            <person name="Kawakami T."/>
            <person name="Noguchi S."/>
            <person name="Itoh T."/>
            <person name="Shigeta K."/>
            <person name="Senba T."/>
            <person name="Matsumura K."/>
            <person name="Nakajima Y."/>
            <person name="Mizuno T."/>
            <person name="Morinaga M."/>
            <person name="Sasaki M."/>
            <person name="Togashi T."/>
            <person name="Oyama M."/>
            <person name="Hata H."/>
            <person name="Watanabe M."/>
            <person name="Komatsu T."/>
            <person name="Mizushima-Sugano J."/>
            <person name="Satoh T."/>
            <person name="Shirai Y."/>
            <person name="Takahashi Y."/>
            <person name="Nakagawa K."/>
            <person name="Okumura K."/>
            <person name="Nagase T."/>
            <person name="Nomura N."/>
            <person name="Kikuchi H."/>
            <person name="Masuho Y."/>
            <person name="Yamashita R."/>
            <person name="Nakai K."/>
            <person name="Yada T."/>
            <person name="Nakamura Y."/>
            <person name="Ohara O."/>
            <person name="Isogai T."/>
            <person name="Sugano S."/>
        </authorList>
    </citation>
    <scope>NUCLEOTIDE SEQUENCE [LARGE SCALE MRNA] (ISOFORMS 2 AND 4)</scope>
    <scope>NUCLEOTIDE SEQUENCE [LARGE SCALE MRNA] OF 277-444 (ISOFORMS 1/2)</scope>
    <source>
        <tissue>Tongue</tissue>
    </source>
</reference>
<reference key="5">
    <citation type="journal article" date="2005" name="DNA Res.">
        <title>Signal sequence and keyword trap in silico for selection of full-length human cDNAs encoding secretion or membrane proteins from oligo-capped cDNA libraries.</title>
        <authorList>
            <person name="Otsuki T."/>
            <person name="Ota T."/>
            <person name="Nishikawa T."/>
            <person name="Hayashi K."/>
            <person name="Suzuki Y."/>
            <person name="Yamamoto J."/>
            <person name="Wakamatsu A."/>
            <person name="Kimura K."/>
            <person name="Sakamoto K."/>
            <person name="Hatano N."/>
            <person name="Kawai Y."/>
            <person name="Ishii S."/>
            <person name="Saito K."/>
            <person name="Kojima S."/>
            <person name="Sugiyama T."/>
            <person name="Ono T."/>
            <person name="Okano K."/>
            <person name="Yoshikawa Y."/>
            <person name="Aotsuka S."/>
            <person name="Sasaki N."/>
            <person name="Hattori A."/>
            <person name="Okumura K."/>
            <person name="Nagai K."/>
            <person name="Sugano S."/>
            <person name="Isogai T."/>
        </authorList>
    </citation>
    <scope>NUCLEOTIDE SEQUENCE [LARGE SCALE MRNA] (ISOFORM 1)</scope>
</reference>
<reference key="6">
    <citation type="journal article" date="2006" name="Nature">
        <title>Human chromosome 11 DNA sequence and analysis including novel gene identification.</title>
        <authorList>
            <person name="Taylor T.D."/>
            <person name="Noguchi H."/>
            <person name="Totoki Y."/>
            <person name="Toyoda A."/>
            <person name="Kuroki Y."/>
            <person name="Dewar K."/>
            <person name="Lloyd C."/>
            <person name="Itoh T."/>
            <person name="Takeda T."/>
            <person name="Kim D.-W."/>
            <person name="She X."/>
            <person name="Barlow K.F."/>
            <person name="Bloom T."/>
            <person name="Bruford E."/>
            <person name="Chang J.L."/>
            <person name="Cuomo C.A."/>
            <person name="Eichler E."/>
            <person name="FitzGerald M.G."/>
            <person name="Jaffe D.B."/>
            <person name="LaButti K."/>
            <person name="Nicol R."/>
            <person name="Park H.-S."/>
            <person name="Seaman C."/>
            <person name="Sougnez C."/>
            <person name="Yang X."/>
            <person name="Zimmer A.R."/>
            <person name="Zody M.C."/>
            <person name="Birren B.W."/>
            <person name="Nusbaum C."/>
            <person name="Fujiyama A."/>
            <person name="Hattori M."/>
            <person name="Rogers J."/>
            <person name="Lander E.S."/>
            <person name="Sakaki Y."/>
        </authorList>
    </citation>
    <scope>NUCLEOTIDE SEQUENCE [LARGE SCALE GENOMIC DNA]</scope>
</reference>
<reference key="7">
    <citation type="submission" date="2005-07" db="EMBL/GenBank/DDBJ databases">
        <authorList>
            <person name="Mural R.J."/>
            <person name="Istrail S."/>
            <person name="Sutton G.G."/>
            <person name="Florea L."/>
            <person name="Halpern A.L."/>
            <person name="Mobarry C.M."/>
            <person name="Lippert R."/>
            <person name="Walenz B."/>
            <person name="Shatkay H."/>
            <person name="Dew I."/>
            <person name="Miller J.R."/>
            <person name="Flanigan M.J."/>
            <person name="Edwards N.J."/>
            <person name="Bolanos R."/>
            <person name="Fasulo D."/>
            <person name="Halldorsson B.V."/>
            <person name="Hannenhalli S."/>
            <person name="Turner R."/>
            <person name="Yooseph S."/>
            <person name="Lu F."/>
            <person name="Nusskern D.R."/>
            <person name="Shue B.C."/>
            <person name="Zheng X.H."/>
            <person name="Zhong F."/>
            <person name="Delcher A.L."/>
            <person name="Huson D.H."/>
            <person name="Kravitz S.A."/>
            <person name="Mouchard L."/>
            <person name="Reinert K."/>
            <person name="Remington K.A."/>
            <person name="Clark A.G."/>
            <person name="Waterman M.S."/>
            <person name="Eichler E.E."/>
            <person name="Adams M.D."/>
            <person name="Hunkapiller M.W."/>
            <person name="Myers E.W."/>
            <person name="Venter J.C."/>
        </authorList>
    </citation>
    <scope>NUCLEOTIDE SEQUENCE [LARGE SCALE GENOMIC DNA]</scope>
</reference>
<reference key="8">
    <citation type="journal article" date="2004" name="Genome Res.">
        <title>The status, quality, and expansion of the NIH full-length cDNA project: the Mammalian Gene Collection (MGC).</title>
        <authorList>
            <consortium name="The MGC Project Team"/>
        </authorList>
    </citation>
    <scope>NUCLEOTIDE SEQUENCE [LARGE SCALE MRNA] (ISOFORM 3)</scope>
    <source>
        <tissue>Brain</tissue>
    </source>
</reference>
<reference key="9">
    <citation type="journal article" date="2007" name="BMC Genomics">
        <title>The full-ORF clone resource of the German cDNA consortium.</title>
        <authorList>
            <person name="Bechtel S."/>
            <person name="Rosenfelder H."/>
            <person name="Duda A."/>
            <person name="Schmidt C.P."/>
            <person name="Ernst U."/>
            <person name="Wellenreuther R."/>
            <person name="Mehrle A."/>
            <person name="Schuster C."/>
            <person name="Bahr A."/>
            <person name="Bloecker H."/>
            <person name="Heubner D."/>
            <person name="Hoerlein A."/>
            <person name="Michel G."/>
            <person name="Wedler H."/>
            <person name="Koehrer K."/>
            <person name="Ottenwaelder B."/>
            <person name="Poustka A."/>
            <person name="Wiemann S."/>
            <person name="Schupp I."/>
        </authorList>
    </citation>
    <scope>NUCLEOTIDE SEQUENCE [LARGE SCALE MRNA] OF 134-444 (ISOFORMS 1/2)</scope>
    <source>
        <tissue>Uterus</tissue>
    </source>
</reference>
<reference key="10">
    <citation type="journal article" date="2002" name="Biochem. Biophys. Res. Commun.">
        <title>The E-box like sterol regulatory element mediates the suppression of human Delta-6 desaturase gene by highly unsaturated fatty acids.</title>
        <authorList>
            <person name="Nara T.Y."/>
            <person name="He W.S."/>
            <person name="Tang C."/>
            <person name="Clarke S.D."/>
            <person name="Nakamura M.T."/>
        </authorList>
    </citation>
    <scope>INDUCTION</scope>
</reference>
<reference key="11">
    <citation type="journal article" date="2003" name="J. Invest. Dermatol.">
        <title>Identification of the delta-6 desaturase of human sebaceous glands: expression and enzyme activity.</title>
        <authorList>
            <person name="Ge L."/>
            <person name="Gordon J.S."/>
            <person name="Hsuan C."/>
            <person name="Stenn K."/>
            <person name="Prouty S.M."/>
        </authorList>
    </citation>
    <scope>FUNCTION</scope>
    <scope>CATALYTIC ACTIVITY</scope>
</reference>
<reference key="12">
    <citation type="journal article" date="2003" name="J. Invest. Dermatol.">
        <authorList>
            <person name="Ge L."/>
            <person name="Gordon J.S."/>
            <person name="Hsuan C."/>
            <person name="Stenn K."/>
            <person name="Prouty S.M."/>
        </authorList>
    </citation>
    <scope>ERRATUM OF PUBMED:12713571</scope>
</reference>
<reference key="13">
    <citation type="journal article" date="2003" name="J. Lipid Res.">
        <title>Regulation of human delta-6 desaturase gene transcription: identification of a functional direct repeat-1 element.</title>
        <authorList>
            <person name="Tang C."/>
            <person name="Cho H.P."/>
            <person name="Nakamura M.T."/>
            <person name="Clarke S.D."/>
        </authorList>
    </citation>
    <scope>INDUCTION</scope>
</reference>
<reference key="14">
    <citation type="journal article" date="2003" name="Int. J. Mol. Med.">
        <title>Expression of human delta-6-desaturase is associated with aggressiveness of human breast cancer.</title>
        <authorList>
            <person name="Lane J."/>
            <person name="Mansel R.E."/>
            <person name="Jiang W.G."/>
        </authorList>
    </citation>
    <scope>TISSUE SPECIFICITY</scope>
</reference>
<reference key="15">
    <citation type="journal article" date="2012" name="Proc. Natl. Acad. Sci. U.S.A.">
        <title>N-terminal acetylome analyses and functional insights of the N-terminal acetyltransferase NatB.</title>
        <authorList>
            <person name="Van Damme P."/>
            <person name="Lasa M."/>
            <person name="Polevoda B."/>
            <person name="Gazquez C."/>
            <person name="Elosegui-Artola A."/>
            <person name="Kim D.S."/>
            <person name="De Juan-Pardo E."/>
            <person name="Demeyer K."/>
            <person name="Hole K."/>
            <person name="Larrea E."/>
            <person name="Timmerman E."/>
            <person name="Prieto J."/>
            <person name="Arnesen T."/>
            <person name="Sherman F."/>
            <person name="Gevaert K."/>
            <person name="Aldabe R."/>
        </authorList>
    </citation>
    <scope>IDENTIFICATION BY MASS SPECTROMETRY [LARGE SCALE ANALYSIS]</scope>
</reference>
<reference key="16">
    <citation type="journal article" date="2015" name="Proteomics">
        <title>N-terminome analysis of the human mitochondrial proteome.</title>
        <authorList>
            <person name="Vaca Jacome A.S."/>
            <person name="Rabilloud T."/>
            <person name="Schaeffer-Reiss C."/>
            <person name="Rompais M."/>
            <person name="Ayoub D."/>
            <person name="Lane L."/>
            <person name="Bairoch A."/>
            <person name="Van Dorsselaer A."/>
            <person name="Carapito C."/>
        </authorList>
    </citation>
    <scope>IDENTIFICATION BY MASS SPECTROMETRY [LARGE SCALE ANALYSIS]</scope>
</reference>
<gene>
    <name evidence="21" type="primary">FADS2</name>
</gene>
<name>FADS2_HUMAN</name>
<feature type="chain" id="PRO_0000307101" description="Acyl-CoA 6-desaturase">
    <location>
        <begin position="1"/>
        <end position="444"/>
    </location>
</feature>
<feature type="topological domain" description="Cytoplasmic" evidence="18">
    <location>
        <begin position="1"/>
        <end position="131"/>
    </location>
</feature>
<feature type="transmembrane region" description="Helical" evidence="4">
    <location>
        <begin position="132"/>
        <end position="152"/>
    </location>
</feature>
<feature type="topological domain" description="Lumenal" evidence="18">
    <location>
        <begin position="153"/>
        <end position="157"/>
    </location>
</feature>
<feature type="transmembrane region" description="Helical" evidence="4">
    <location>
        <begin position="158"/>
        <end position="178"/>
    </location>
</feature>
<feature type="topological domain" description="Cytoplasmic" evidence="18">
    <location>
        <begin position="179"/>
        <end position="264"/>
    </location>
</feature>
<feature type="transmembrane region" description="Helical" evidence="4">
    <location>
        <begin position="265"/>
        <end position="285"/>
    </location>
</feature>
<feature type="topological domain" description="Lumenal" evidence="18">
    <location>
        <begin position="286"/>
        <end position="305"/>
    </location>
</feature>
<feature type="transmembrane region" description="Helical" evidence="4">
    <location>
        <begin position="306"/>
        <end position="326"/>
    </location>
</feature>
<feature type="topological domain" description="Cytoplasmic" evidence="18">
    <location>
        <begin position="327"/>
        <end position="444"/>
    </location>
</feature>
<feature type="domain" description="Cytochrome b5 heme-binding" evidence="5">
    <location>
        <begin position="18"/>
        <end position="95"/>
    </location>
</feature>
<feature type="short sequence motif" description="Histidine box-1">
    <location>
        <begin position="180"/>
        <end position="184"/>
    </location>
</feature>
<feature type="short sequence motif" description="Histidine box-2">
    <location>
        <begin position="217"/>
        <end position="221"/>
    </location>
</feature>
<feature type="short sequence motif" description="Histidine box-3">
    <location>
        <begin position="382"/>
        <end position="386"/>
    </location>
</feature>
<feature type="splice variant" id="VSP_028568" description="In isoform 2." evidence="14 17">
    <original>MGKGGNQGEGAAEREVSVPTFSWEEIQKHNLRTDRWLVIDRKVYNITKWSIQHPGGQRVIGHYAGEDAT</original>
    <variation>MHGREAGPFVCVCVLLASIPTPQTPLLQASLPPFHPASAGHPITGQQ</variation>
    <location>
        <begin position="1"/>
        <end position="69"/>
    </location>
</feature>
<feature type="splice variant" id="VSP_054809" description="In isoform 4." evidence="14">
    <original>MGKGGNQGEGAAEREVSVPTFSWEEIQKHNLRTDRWLVIDRKVYNITKWSIQHPGGQRVIGHYAGEDAT</original>
    <variation>MTREPPGCRRVNSLMLYTLRSITSHRSSHPERWATSSQ</variation>
    <location>
        <begin position="1"/>
        <end position="69"/>
    </location>
</feature>
<feature type="splice variant" id="VSP_028569" description="In isoform 3." evidence="15">
    <original>HLFPTMPRHNLHKIAPLVKSLCAKHGIEYQEKPLLRALLDIIRSLKKSGKLWLDAYLHK</original>
    <variation>Q</variation>
    <location>
        <begin position="386"/>
        <end position="444"/>
    </location>
</feature>
<feature type="sequence conflict" description="In Ref. 9; CAB43280." evidence="18" ref="9">
    <original>LLLL</original>
    <variation>RTRG</variation>
    <location>
        <begin position="134"/>
        <end position="137"/>
    </location>
</feature>
<feature type="sequence conflict" description="In Ref. 4; BAB55167." evidence="18" ref="4">
    <original>NF</original>
    <variation>SL</variation>
    <location>
        <begin position="380"/>
        <end position="381"/>
    </location>
</feature>
<feature type="sequence conflict" description="In Ref. 9; CAB43280." evidence="18" ref="9">
    <original>SLK</original>
    <variation>DLM</variation>
    <location>
        <begin position="429"/>
        <end position="431"/>
    </location>
</feature>